<evidence type="ECO:0000250" key="1"/>
<evidence type="ECO:0000255" key="2">
    <source>
        <dbReference type="PROSITE-ProRule" id="PRU00184"/>
    </source>
</evidence>
<evidence type="ECO:0000256" key="3">
    <source>
        <dbReference type="SAM" id="MobiDB-lite"/>
    </source>
</evidence>
<evidence type="ECO:0000269" key="4">
    <source>
    </source>
</evidence>
<evidence type="ECO:0000303" key="5">
    <source>
    </source>
</evidence>
<evidence type="ECO:0000303" key="6">
    <source>
    </source>
</evidence>
<evidence type="ECO:0000303" key="7">
    <source>
    </source>
</evidence>
<evidence type="ECO:0000305" key="8"/>
<evidence type="ECO:0007744" key="9">
    <source>
    </source>
</evidence>
<evidence type="ECO:0007744" key="10">
    <source>
    </source>
</evidence>
<dbReference type="EMBL" id="AF160728">
    <property type="protein sequence ID" value="AAD47635.1"/>
    <property type="molecule type" value="mRNA"/>
</dbReference>
<dbReference type="EMBL" id="EU370780">
    <property type="protein sequence ID" value="ABY68575.1"/>
    <property type="molecule type" value="Genomic_DNA"/>
</dbReference>
<dbReference type="EMBL" id="AK313993">
    <property type="protein sequence ID" value="BAG36705.1"/>
    <property type="molecule type" value="mRNA"/>
</dbReference>
<dbReference type="EMBL" id="Z93242">
    <property type="status" value="NOT_ANNOTATED_CDS"/>
    <property type="molecule type" value="Genomic_DNA"/>
</dbReference>
<dbReference type="EMBL" id="CH471074">
    <property type="protein sequence ID" value="EAW98929.1"/>
    <property type="molecule type" value="Genomic_DNA"/>
</dbReference>
<dbReference type="EMBL" id="BC105028">
    <property type="protein sequence ID" value="AAI05029.1"/>
    <property type="molecule type" value="mRNA"/>
</dbReference>
<dbReference type="EMBL" id="BC026159">
    <property type="protein sequence ID" value="AAH26159.2"/>
    <property type="molecule type" value="mRNA"/>
</dbReference>
<dbReference type="CCDS" id="CCDS14182.2">
    <molecule id="Q9UN30-2"/>
</dbReference>
<dbReference type="CCDS" id="CCDS35210.1">
    <molecule id="Q9UN30-3"/>
</dbReference>
<dbReference type="CCDS" id="CCDS35211.1">
    <molecule id="Q9UN30-1"/>
</dbReference>
<dbReference type="RefSeq" id="NP_001032624.1">
    <molecule id="Q9UN30-1"/>
    <property type="nucleotide sequence ID" value="NM_001037535.3"/>
</dbReference>
<dbReference type="RefSeq" id="NP_001032625.1">
    <molecule id="Q9UN30-1"/>
    <property type="nucleotide sequence ID" value="NM_001037536.3"/>
</dbReference>
<dbReference type="RefSeq" id="NP_001032629.1">
    <molecule id="Q9UN30-3"/>
    <property type="nucleotide sequence ID" value="NM_001037540.3"/>
</dbReference>
<dbReference type="RefSeq" id="NP_006737.2">
    <molecule id="Q9UN30-2"/>
    <property type="nucleotide sequence ID" value="NM_006746.6"/>
</dbReference>
<dbReference type="RefSeq" id="XP_006724571.1">
    <molecule id="Q9UN30-3"/>
    <property type="nucleotide sequence ID" value="XM_006724508.5"/>
</dbReference>
<dbReference type="RefSeq" id="XP_016885212.1">
    <molecule id="Q9UN30-2"/>
    <property type="nucleotide sequence ID" value="XM_017029723.3"/>
</dbReference>
<dbReference type="RefSeq" id="XP_047298305.1">
    <molecule id="Q9UN30-1"/>
    <property type="nucleotide sequence ID" value="XM_047442349.1"/>
</dbReference>
<dbReference type="RefSeq" id="XP_047298306.1">
    <molecule id="Q9UN30-1"/>
    <property type="nucleotide sequence ID" value="XM_047442350.1"/>
</dbReference>
<dbReference type="RefSeq" id="XP_054183533.1">
    <molecule id="Q9UN30-3"/>
    <property type="nucleotide sequence ID" value="XM_054327558.1"/>
</dbReference>
<dbReference type="RefSeq" id="XP_054183534.1">
    <molecule id="Q9UN30-2"/>
    <property type="nucleotide sequence ID" value="XM_054327559.1"/>
</dbReference>
<dbReference type="RefSeq" id="XP_054183537.1">
    <molecule id="Q9UN30-1"/>
    <property type="nucleotide sequence ID" value="XM_054327562.1"/>
</dbReference>
<dbReference type="SMR" id="Q9UN30"/>
<dbReference type="BioGRID" id="112227">
    <property type="interactions" value="60"/>
</dbReference>
<dbReference type="CORUM" id="Q9UN30"/>
<dbReference type="FunCoup" id="Q9UN30">
    <property type="interactions" value="208"/>
</dbReference>
<dbReference type="IntAct" id="Q9UN30">
    <property type="interactions" value="38"/>
</dbReference>
<dbReference type="MINT" id="Q9UN30"/>
<dbReference type="STRING" id="9606.ENSP00000369380"/>
<dbReference type="iPTMnet" id="Q9UN30"/>
<dbReference type="PhosphoSitePlus" id="Q9UN30"/>
<dbReference type="BioMuta" id="SCML1"/>
<dbReference type="DMDM" id="254763330"/>
<dbReference type="jPOST" id="Q9UN30"/>
<dbReference type="MassIVE" id="Q9UN30"/>
<dbReference type="PaxDb" id="9606-ENSP00000369380"/>
<dbReference type="PeptideAtlas" id="Q9UN30"/>
<dbReference type="ProteomicsDB" id="85240">
    <molecule id="Q9UN30-3"/>
</dbReference>
<dbReference type="ProteomicsDB" id="85241">
    <molecule id="Q9UN30-1"/>
</dbReference>
<dbReference type="ProteomicsDB" id="85242">
    <molecule id="Q9UN30-2"/>
</dbReference>
<dbReference type="Antibodypedia" id="24087">
    <property type="antibodies" value="176 antibodies from 26 providers"/>
</dbReference>
<dbReference type="DNASU" id="6322"/>
<dbReference type="Ensembl" id="ENST00000380041.8">
    <molecule id="Q9UN30-3"/>
    <property type="protein sequence ID" value="ENSP00000369380.3"/>
    <property type="gene ID" value="ENSG00000047634.15"/>
</dbReference>
<dbReference type="Ensembl" id="ENST00000380043.7">
    <molecule id="Q9UN30-2"/>
    <property type="protein sequence ID" value="ENSP00000369382.3"/>
    <property type="gene ID" value="ENSG00000047634.15"/>
</dbReference>
<dbReference type="Ensembl" id="ENST00000380045.7">
    <molecule id="Q9UN30-1"/>
    <property type="protein sequence ID" value="ENSP00000369384.3"/>
    <property type="gene ID" value="ENSG00000047634.15"/>
</dbReference>
<dbReference type="Ensembl" id="ENST00000398080.5">
    <molecule id="Q9UN30-1"/>
    <property type="protein sequence ID" value="ENSP00000381154.1"/>
    <property type="gene ID" value="ENSG00000047634.15"/>
</dbReference>
<dbReference type="GeneID" id="6322"/>
<dbReference type="KEGG" id="hsa:6322"/>
<dbReference type="MANE-Select" id="ENST00000380041.8">
    <property type="protein sequence ID" value="ENSP00000369380.3"/>
    <property type="RefSeq nucleotide sequence ID" value="NM_001037540.3"/>
    <property type="RefSeq protein sequence ID" value="NP_001032629.1"/>
</dbReference>
<dbReference type="UCSC" id="uc004cyb.5">
    <molecule id="Q9UN30-3"/>
    <property type="organism name" value="human"/>
</dbReference>
<dbReference type="AGR" id="HGNC:10580"/>
<dbReference type="CTD" id="6322"/>
<dbReference type="DisGeNET" id="6322"/>
<dbReference type="GeneCards" id="SCML1"/>
<dbReference type="HGNC" id="HGNC:10580">
    <property type="gene designation" value="SCML1"/>
</dbReference>
<dbReference type="HPA" id="ENSG00000047634">
    <property type="expression patterns" value="Low tissue specificity"/>
</dbReference>
<dbReference type="MIM" id="300227">
    <property type="type" value="gene"/>
</dbReference>
<dbReference type="neXtProt" id="NX_Q9UN30"/>
<dbReference type="OpenTargets" id="ENSG00000047634"/>
<dbReference type="PharmGKB" id="PA34998"/>
<dbReference type="VEuPathDB" id="HostDB:ENSG00000047634"/>
<dbReference type="eggNOG" id="KOG3766">
    <property type="taxonomic scope" value="Eukaryota"/>
</dbReference>
<dbReference type="GeneTree" id="ENSGT00940000164589"/>
<dbReference type="HOGENOM" id="CLU_1320505_0_0_1"/>
<dbReference type="InParanoid" id="Q9UN30"/>
<dbReference type="OMA" id="TIFYAYE"/>
<dbReference type="OrthoDB" id="5912862at2759"/>
<dbReference type="PAN-GO" id="Q9UN30">
    <property type="GO annotations" value="4 GO annotations based on evolutionary models"/>
</dbReference>
<dbReference type="PhylomeDB" id="Q9UN30"/>
<dbReference type="PathwayCommons" id="Q9UN30"/>
<dbReference type="SignaLink" id="Q9UN30"/>
<dbReference type="BioGRID-ORCS" id="6322">
    <property type="hits" value="14 hits in 777 CRISPR screens"/>
</dbReference>
<dbReference type="ChiTaRS" id="SCML1">
    <property type="organism name" value="human"/>
</dbReference>
<dbReference type="GenomeRNAi" id="6322"/>
<dbReference type="Pharos" id="Q9UN30">
    <property type="development level" value="Tdark"/>
</dbReference>
<dbReference type="PRO" id="PR:Q9UN30"/>
<dbReference type="Proteomes" id="UP000005640">
    <property type="component" value="Chromosome X"/>
</dbReference>
<dbReference type="RNAct" id="Q9UN30">
    <property type="molecule type" value="protein"/>
</dbReference>
<dbReference type="Bgee" id="ENSG00000047634">
    <property type="expression patterns" value="Expressed in secondary oocyte and 189 other cell types or tissues"/>
</dbReference>
<dbReference type="ExpressionAtlas" id="Q9UN30">
    <property type="expression patterns" value="baseline and differential"/>
</dbReference>
<dbReference type="GO" id="GO:0005634">
    <property type="term" value="C:nucleus"/>
    <property type="evidence" value="ECO:0000318"/>
    <property type="project" value="GO_Central"/>
</dbReference>
<dbReference type="GO" id="GO:0003682">
    <property type="term" value="F:chromatin binding"/>
    <property type="evidence" value="ECO:0000318"/>
    <property type="project" value="GO_Central"/>
</dbReference>
<dbReference type="GO" id="GO:0042393">
    <property type="term" value="F:histone binding"/>
    <property type="evidence" value="ECO:0000318"/>
    <property type="project" value="GO_Central"/>
</dbReference>
<dbReference type="GO" id="GO:0045892">
    <property type="term" value="P:negative regulation of DNA-templated transcription"/>
    <property type="evidence" value="ECO:0000318"/>
    <property type="project" value="GO_Central"/>
</dbReference>
<dbReference type="CDD" id="cd09578">
    <property type="entry name" value="SAM_Scm"/>
    <property type="match status" value="1"/>
</dbReference>
<dbReference type="FunFam" id="1.10.150.50:FF:000018">
    <property type="entry name" value="Polycomb protein scmh1 isoform 4"/>
    <property type="match status" value="1"/>
</dbReference>
<dbReference type="Gene3D" id="1.10.150.50">
    <property type="entry name" value="Transcription Factor, Ets-1"/>
    <property type="match status" value="1"/>
</dbReference>
<dbReference type="InterPro" id="IPR001660">
    <property type="entry name" value="SAM"/>
</dbReference>
<dbReference type="InterPro" id="IPR013761">
    <property type="entry name" value="SAM/pointed_sf"/>
</dbReference>
<dbReference type="InterPro" id="IPR047531">
    <property type="entry name" value="SAM_Scm-like"/>
</dbReference>
<dbReference type="PANTHER" id="PTHR47305">
    <property type="entry name" value="BEN DOMAIN-CONTAINING PROTEIN 2"/>
    <property type="match status" value="1"/>
</dbReference>
<dbReference type="PANTHER" id="PTHR47305:SF2">
    <property type="entry name" value="SAM DOMAIN-CONTAINING PROTEIN"/>
    <property type="match status" value="1"/>
</dbReference>
<dbReference type="Pfam" id="PF00536">
    <property type="entry name" value="SAM_1"/>
    <property type="match status" value="1"/>
</dbReference>
<dbReference type="SMART" id="SM00454">
    <property type="entry name" value="SAM"/>
    <property type="match status" value="1"/>
</dbReference>
<dbReference type="SUPFAM" id="SSF47769">
    <property type="entry name" value="SAM/Pointed domain"/>
    <property type="match status" value="1"/>
</dbReference>
<dbReference type="PROSITE" id="PS50105">
    <property type="entry name" value="SAM_DOMAIN"/>
    <property type="match status" value="1"/>
</dbReference>
<proteinExistence type="evidence at protein level"/>
<accession>Q9UN30</accession>
<accession>B0FZN6</accession>
<accession>B2RA08</accession>
<accession>Q5H968</accession>
<accession>Q5H969</accession>
<keyword id="KW-0025">Alternative splicing</keyword>
<keyword id="KW-0539">Nucleus</keyword>
<keyword id="KW-0597">Phosphoprotein</keyword>
<keyword id="KW-1267">Proteomics identification</keyword>
<keyword id="KW-1185">Reference proteome</keyword>
<keyword id="KW-0678">Repressor</keyword>
<keyword id="KW-0804">Transcription</keyword>
<keyword id="KW-0805">Transcription regulation</keyword>
<feature type="chain" id="PRO_0000097627" description="Sex comb on midleg-like protein 1">
    <location>
        <begin position="1"/>
        <end position="329"/>
    </location>
</feature>
<feature type="domain" description="SAM" evidence="2">
    <location>
        <begin position="258"/>
        <end position="325"/>
    </location>
</feature>
<feature type="region of interest" description="Disordered" evidence="3">
    <location>
        <begin position="138"/>
        <end position="157"/>
    </location>
</feature>
<feature type="modified residue" description="Phosphoserine" evidence="9">
    <location>
        <position position="138"/>
    </location>
</feature>
<feature type="modified residue" description="Phosphoserine" evidence="10">
    <location>
        <position position="238"/>
    </location>
</feature>
<feature type="splice variant" id="VSP_037800" description="In isoform 1." evidence="5 6 7">
    <location>
        <begin position="1"/>
        <end position="121"/>
    </location>
</feature>
<feature type="splice variant" id="VSP_037801" description="In isoform 2." evidence="6">
    <original>IKTRIPTYDEDDNTILYAYETKPEFVNK</original>
    <variation>Q</variation>
    <location>
        <begin position="12"/>
        <end position="39"/>
    </location>
</feature>
<organism>
    <name type="scientific">Homo sapiens</name>
    <name type="common">Human</name>
    <dbReference type="NCBI Taxonomy" id="9606"/>
    <lineage>
        <taxon>Eukaryota</taxon>
        <taxon>Metazoa</taxon>
        <taxon>Chordata</taxon>
        <taxon>Craniata</taxon>
        <taxon>Vertebrata</taxon>
        <taxon>Euteleostomi</taxon>
        <taxon>Mammalia</taxon>
        <taxon>Eutheria</taxon>
        <taxon>Euarchontoglires</taxon>
        <taxon>Primates</taxon>
        <taxon>Haplorrhini</taxon>
        <taxon>Catarrhini</taxon>
        <taxon>Hominidae</taxon>
        <taxon>Homo</taxon>
    </lineage>
</organism>
<reference key="1">
    <citation type="journal article" date="1998" name="Genomics">
        <title>Characterization of SCML1, a new gene in Xp22, with homology to developmental polycomb genes.</title>
        <authorList>
            <person name="van de Vosse E."/>
            <person name="Walpole S.M."/>
            <person name="Nicolaou A."/>
            <person name="van der Bent P."/>
            <person name="Cahn A."/>
            <person name="Vaudin M."/>
            <person name="Ross M.T."/>
            <person name="Durham J."/>
            <person name="Pavitt R."/>
            <person name="Wilkinson J."/>
            <person name="Grafham D."/>
            <person name="Bergen A.A.B."/>
            <person name="van Ommen G.-J.B."/>
            <person name="Yates J.R.W."/>
            <person name="den Dunnen J.T."/>
            <person name="Trump D."/>
        </authorList>
    </citation>
    <scope>NUCLEOTIDE SEQUENCE [MRNA] (ISOFORM 1)</scope>
    <scope>TISSUE SPECIFICITY</scope>
</reference>
<reference key="2">
    <citation type="journal article" date="2008" name="BMC Evol. Biol.">
        <title>Adaptive evolution of SCML1 in primates, a gene involved in male reproduction.</title>
        <authorList>
            <person name="Wu H.-H."/>
            <person name="Su B."/>
        </authorList>
    </citation>
    <scope>NUCLEOTIDE SEQUENCE [GENOMIC DNA] (ISOFORM 3)</scope>
</reference>
<reference key="3">
    <citation type="journal article" date="2004" name="Nat. Genet.">
        <title>Complete sequencing and characterization of 21,243 full-length human cDNAs.</title>
        <authorList>
            <person name="Ota T."/>
            <person name="Suzuki Y."/>
            <person name="Nishikawa T."/>
            <person name="Otsuki T."/>
            <person name="Sugiyama T."/>
            <person name="Irie R."/>
            <person name="Wakamatsu A."/>
            <person name="Hayashi K."/>
            <person name="Sato H."/>
            <person name="Nagai K."/>
            <person name="Kimura K."/>
            <person name="Makita H."/>
            <person name="Sekine M."/>
            <person name="Obayashi M."/>
            <person name="Nishi T."/>
            <person name="Shibahara T."/>
            <person name="Tanaka T."/>
            <person name="Ishii S."/>
            <person name="Yamamoto J."/>
            <person name="Saito K."/>
            <person name="Kawai Y."/>
            <person name="Isono Y."/>
            <person name="Nakamura Y."/>
            <person name="Nagahari K."/>
            <person name="Murakami K."/>
            <person name="Yasuda T."/>
            <person name="Iwayanagi T."/>
            <person name="Wagatsuma M."/>
            <person name="Shiratori A."/>
            <person name="Sudo H."/>
            <person name="Hosoiri T."/>
            <person name="Kaku Y."/>
            <person name="Kodaira H."/>
            <person name="Kondo H."/>
            <person name="Sugawara M."/>
            <person name="Takahashi M."/>
            <person name="Kanda K."/>
            <person name="Yokoi T."/>
            <person name="Furuya T."/>
            <person name="Kikkawa E."/>
            <person name="Omura Y."/>
            <person name="Abe K."/>
            <person name="Kamihara K."/>
            <person name="Katsuta N."/>
            <person name="Sato K."/>
            <person name="Tanikawa M."/>
            <person name="Yamazaki M."/>
            <person name="Ninomiya K."/>
            <person name="Ishibashi T."/>
            <person name="Yamashita H."/>
            <person name="Murakawa K."/>
            <person name="Fujimori K."/>
            <person name="Tanai H."/>
            <person name="Kimata M."/>
            <person name="Watanabe M."/>
            <person name="Hiraoka S."/>
            <person name="Chiba Y."/>
            <person name="Ishida S."/>
            <person name="Ono Y."/>
            <person name="Takiguchi S."/>
            <person name="Watanabe S."/>
            <person name="Yosida M."/>
            <person name="Hotuta T."/>
            <person name="Kusano J."/>
            <person name="Kanehori K."/>
            <person name="Takahashi-Fujii A."/>
            <person name="Hara H."/>
            <person name="Tanase T.-O."/>
            <person name="Nomura Y."/>
            <person name="Togiya S."/>
            <person name="Komai F."/>
            <person name="Hara R."/>
            <person name="Takeuchi K."/>
            <person name="Arita M."/>
            <person name="Imose N."/>
            <person name="Musashino K."/>
            <person name="Yuuki H."/>
            <person name="Oshima A."/>
            <person name="Sasaki N."/>
            <person name="Aotsuka S."/>
            <person name="Yoshikawa Y."/>
            <person name="Matsunawa H."/>
            <person name="Ichihara T."/>
            <person name="Shiohata N."/>
            <person name="Sano S."/>
            <person name="Moriya S."/>
            <person name="Momiyama H."/>
            <person name="Satoh N."/>
            <person name="Takami S."/>
            <person name="Terashima Y."/>
            <person name="Suzuki O."/>
            <person name="Nakagawa S."/>
            <person name="Senoh A."/>
            <person name="Mizoguchi H."/>
            <person name="Goto Y."/>
            <person name="Shimizu F."/>
            <person name="Wakebe H."/>
            <person name="Hishigaki H."/>
            <person name="Watanabe T."/>
            <person name="Sugiyama A."/>
            <person name="Takemoto M."/>
            <person name="Kawakami B."/>
            <person name="Yamazaki M."/>
            <person name="Watanabe K."/>
            <person name="Kumagai A."/>
            <person name="Itakura S."/>
            <person name="Fukuzumi Y."/>
            <person name="Fujimori Y."/>
            <person name="Komiyama M."/>
            <person name="Tashiro H."/>
            <person name="Tanigami A."/>
            <person name="Fujiwara T."/>
            <person name="Ono T."/>
            <person name="Yamada K."/>
            <person name="Fujii Y."/>
            <person name="Ozaki K."/>
            <person name="Hirao M."/>
            <person name="Ohmori Y."/>
            <person name="Kawabata A."/>
            <person name="Hikiji T."/>
            <person name="Kobatake N."/>
            <person name="Inagaki H."/>
            <person name="Ikema Y."/>
            <person name="Okamoto S."/>
            <person name="Okitani R."/>
            <person name="Kawakami T."/>
            <person name="Noguchi S."/>
            <person name="Itoh T."/>
            <person name="Shigeta K."/>
            <person name="Senba T."/>
            <person name="Matsumura K."/>
            <person name="Nakajima Y."/>
            <person name="Mizuno T."/>
            <person name="Morinaga M."/>
            <person name="Sasaki M."/>
            <person name="Togashi T."/>
            <person name="Oyama M."/>
            <person name="Hata H."/>
            <person name="Watanabe M."/>
            <person name="Komatsu T."/>
            <person name="Mizushima-Sugano J."/>
            <person name="Satoh T."/>
            <person name="Shirai Y."/>
            <person name="Takahashi Y."/>
            <person name="Nakagawa K."/>
            <person name="Okumura K."/>
            <person name="Nagase T."/>
            <person name="Nomura N."/>
            <person name="Kikuchi H."/>
            <person name="Masuho Y."/>
            <person name="Yamashita R."/>
            <person name="Nakai K."/>
            <person name="Yada T."/>
            <person name="Nakamura Y."/>
            <person name="Ohara O."/>
            <person name="Isogai T."/>
            <person name="Sugano S."/>
        </authorList>
    </citation>
    <scope>NUCLEOTIDE SEQUENCE [LARGE SCALE MRNA] (ISOFORM 1)</scope>
    <source>
        <tissue>Liver</tissue>
    </source>
</reference>
<reference key="4">
    <citation type="journal article" date="2005" name="Nature">
        <title>The DNA sequence of the human X chromosome.</title>
        <authorList>
            <person name="Ross M.T."/>
            <person name="Grafham D.V."/>
            <person name="Coffey A.J."/>
            <person name="Scherer S."/>
            <person name="McLay K."/>
            <person name="Muzny D."/>
            <person name="Platzer M."/>
            <person name="Howell G.R."/>
            <person name="Burrows C."/>
            <person name="Bird C.P."/>
            <person name="Frankish A."/>
            <person name="Lovell F.L."/>
            <person name="Howe K.L."/>
            <person name="Ashurst J.L."/>
            <person name="Fulton R.S."/>
            <person name="Sudbrak R."/>
            <person name="Wen G."/>
            <person name="Jones M.C."/>
            <person name="Hurles M.E."/>
            <person name="Andrews T.D."/>
            <person name="Scott C.E."/>
            <person name="Searle S."/>
            <person name="Ramser J."/>
            <person name="Whittaker A."/>
            <person name="Deadman R."/>
            <person name="Carter N.P."/>
            <person name="Hunt S.E."/>
            <person name="Chen R."/>
            <person name="Cree A."/>
            <person name="Gunaratne P."/>
            <person name="Havlak P."/>
            <person name="Hodgson A."/>
            <person name="Metzker M.L."/>
            <person name="Richards S."/>
            <person name="Scott G."/>
            <person name="Steffen D."/>
            <person name="Sodergren E."/>
            <person name="Wheeler D.A."/>
            <person name="Worley K.C."/>
            <person name="Ainscough R."/>
            <person name="Ambrose K.D."/>
            <person name="Ansari-Lari M.A."/>
            <person name="Aradhya S."/>
            <person name="Ashwell R.I."/>
            <person name="Babbage A.K."/>
            <person name="Bagguley C.L."/>
            <person name="Ballabio A."/>
            <person name="Banerjee R."/>
            <person name="Barker G.E."/>
            <person name="Barlow K.F."/>
            <person name="Barrett I.P."/>
            <person name="Bates K.N."/>
            <person name="Beare D.M."/>
            <person name="Beasley H."/>
            <person name="Beasley O."/>
            <person name="Beck A."/>
            <person name="Bethel G."/>
            <person name="Blechschmidt K."/>
            <person name="Brady N."/>
            <person name="Bray-Allen S."/>
            <person name="Bridgeman A.M."/>
            <person name="Brown A.J."/>
            <person name="Brown M.J."/>
            <person name="Bonnin D."/>
            <person name="Bruford E.A."/>
            <person name="Buhay C."/>
            <person name="Burch P."/>
            <person name="Burford D."/>
            <person name="Burgess J."/>
            <person name="Burrill W."/>
            <person name="Burton J."/>
            <person name="Bye J.M."/>
            <person name="Carder C."/>
            <person name="Carrel L."/>
            <person name="Chako J."/>
            <person name="Chapman J.C."/>
            <person name="Chavez D."/>
            <person name="Chen E."/>
            <person name="Chen G."/>
            <person name="Chen Y."/>
            <person name="Chen Z."/>
            <person name="Chinault C."/>
            <person name="Ciccodicola A."/>
            <person name="Clark S.Y."/>
            <person name="Clarke G."/>
            <person name="Clee C.M."/>
            <person name="Clegg S."/>
            <person name="Clerc-Blankenburg K."/>
            <person name="Clifford K."/>
            <person name="Cobley V."/>
            <person name="Cole C.G."/>
            <person name="Conquer J.S."/>
            <person name="Corby N."/>
            <person name="Connor R.E."/>
            <person name="David R."/>
            <person name="Davies J."/>
            <person name="Davis C."/>
            <person name="Davis J."/>
            <person name="Delgado O."/>
            <person name="Deshazo D."/>
            <person name="Dhami P."/>
            <person name="Ding Y."/>
            <person name="Dinh H."/>
            <person name="Dodsworth S."/>
            <person name="Draper H."/>
            <person name="Dugan-Rocha S."/>
            <person name="Dunham A."/>
            <person name="Dunn M."/>
            <person name="Durbin K.J."/>
            <person name="Dutta I."/>
            <person name="Eades T."/>
            <person name="Ellwood M."/>
            <person name="Emery-Cohen A."/>
            <person name="Errington H."/>
            <person name="Evans K.L."/>
            <person name="Faulkner L."/>
            <person name="Francis F."/>
            <person name="Frankland J."/>
            <person name="Fraser A.E."/>
            <person name="Galgoczy P."/>
            <person name="Gilbert J."/>
            <person name="Gill R."/>
            <person name="Gloeckner G."/>
            <person name="Gregory S.G."/>
            <person name="Gribble S."/>
            <person name="Griffiths C."/>
            <person name="Grocock R."/>
            <person name="Gu Y."/>
            <person name="Gwilliam R."/>
            <person name="Hamilton C."/>
            <person name="Hart E.A."/>
            <person name="Hawes A."/>
            <person name="Heath P.D."/>
            <person name="Heitmann K."/>
            <person name="Hennig S."/>
            <person name="Hernandez J."/>
            <person name="Hinzmann B."/>
            <person name="Ho S."/>
            <person name="Hoffs M."/>
            <person name="Howden P.J."/>
            <person name="Huckle E.J."/>
            <person name="Hume J."/>
            <person name="Hunt P.J."/>
            <person name="Hunt A.R."/>
            <person name="Isherwood J."/>
            <person name="Jacob L."/>
            <person name="Johnson D."/>
            <person name="Jones S."/>
            <person name="de Jong P.J."/>
            <person name="Joseph S.S."/>
            <person name="Keenan S."/>
            <person name="Kelly S."/>
            <person name="Kershaw J.K."/>
            <person name="Khan Z."/>
            <person name="Kioschis P."/>
            <person name="Klages S."/>
            <person name="Knights A.J."/>
            <person name="Kosiura A."/>
            <person name="Kovar-Smith C."/>
            <person name="Laird G.K."/>
            <person name="Langford C."/>
            <person name="Lawlor S."/>
            <person name="Leversha M."/>
            <person name="Lewis L."/>
            <person name="Liu W."/>
            <person name="Lloyd C."/>
            <person name="Lloyd D.M."/>
            <person name="Loulseged H."/>
            <person name="Loveland J.E."/>
            <person name="Lovell J.D."/>
            <person name="Lozado R."/>
            <person name="Lu J."/>
            <person name="Lyne R."/>
            <person name="Ma J."/>
            <person name="Maheshwari M."/>
            <person name="Matthews L.H."/>
            <person name="McDowall J."/>
            <person name="McLaren S."/>
            <person name="McMurray A."/>
            <person name="Meidl P."/>
            <person name="Meitinger T."/>
            <person name="Milne S."/>
            <person name="Miner G."/>
            <person name="Mistry S.L."/>
            <person name="Morgan M."/>
            <person name="Morris S."/>
            <person name="Mueller I."/>
            <person name="Mullikin J.C."/>
            <person name="Nguyen N."/>
            <person name="Nordsiek G."/>
            <person name="Nyakatura G."/>
            <person name="O'dell C.N."/>
            <person name="Okwuonu G."/>
            <person name="Palmer S."/>
            <person name="Pandian R."/>
            <person name="Parker D."/>
            <person name="Parrish J."/>
            <person name="Pasternak S."/>
            <person name="Patel D."/>
            <person name="Pearce A.V."/>
            <person name="Pearson D.M."/>
            <person name="Pelan S.E."/>
            <person name="Perez L."/>
            <person name="Porter K.M."/>
            <person name="Ramsey Y."/>
            <person name="Reichwald K."/>
            <person name="Rhodes S."/>
            <person name="Ridler K.A."/>
            <person name="Schlessinger D."/>
            <person name="Schueler M.G."/>
            <person name="Sehra H.K."/>
            <person name="Shaw-Smith C."/>
            <person name="Shen H."/>
            <person name="Sheridan E.M."/>
            <person name="Shownkeen R."/>
            <person name="Skuce C.D."/>
            <person name="Smith M.L."/>
            <person name="Sotheran E.C."/>
            <person name="Steingruber H.E."/>
            <person name="Steward C.A."/>
            <person name="Storey R."/>
            <person name="Swann R.M."/>
            <person name="Swarbreck D."/>
            <person name="Tabor P.E."/>
            <person name="Taudien S."/>
            <person name="Taylor T."/>
            <person name="Teague B."/>
            <person name="Thomas K."/>
            <person name="Thorpe A."/>
            <person name="Timms K."/>
            <person name="Tracey A."/>
            <person name="Trevanion S."/>
            <person name="Tromans A.C."/>
            <person name="d'Urso M."/>
            <person name="Verduzco D."/>
            <person name="Villasana D."/>
            <person name="Waldron L."/>
            <person name="Wall M."/>
            <person name="Wang Q."/>
            <person name="Warren J."/>
            <person name="Warry G.L."/>
            <person name="Wei X."/>
            <person name="West A."/>
            <person name="Whitehead S.L."/>
            <person name="Whiteley M.N."/>
            <person name="Wilkinson J.E."/>
            <person name="Willey D.L."/>
            <person name="Williams G."/>
            <person name="Williams L."/>
            <person name="Williamson A."/>
            <person name="Williamson H."/>
            <person name="Wilming L."/>
            <person name="Woodmansey R.L."/>
            <person name="Wray P.W."/>
            <person name="Yen J."/>
            <person name="Zhang J."/>
            <person name="Zhou J."/>
            <person name="Zoghbi H."/>
            <person name="Zorilla S."/>
            <person name="Buck D."/>
            <person name="Reinhardt R."/>
            <person name="Poustka A."/>
            <person name="Rosenthal A."/>
            <person name="Lehrach H."/>
            <person name="Meindl A."/>
            <person name="Minx P.J."/>
            <person name="Hillier L.W."/>
            <person name="Willard H.F."/>
            <person name="Wilson R.K."/>
            <person name="Waterston R.H."/>
            <person name="Rice C.M."/>
            <person name="Vaudin M."/>
            <person name="Coulson A."/>
            <person name="Nelson D.L."/>
            <person name="Weinstock G."/>
            <person name="Sulston J.E."/>
            <person name="Durbin R.M."/>
            <person name="Hubbard T."/>
            <person name="Gibbs R.A."/>
            <person name="Beck S."/>
            <person name="Rogers J."/>
            <person name="Bentley D.R."/>
        </authorList>
    </citation>
    <scope>NUCLEOTIDE SEQUENCE [LARGE SCALE GENOMIC DNA]</scope>
</reference>
<reference key="5">
    <citation type="submission" date="2005-07" db="EMBL/GenBank/DDBJ databases">
        <authorList>
            <person name="Mural R.J."/>
            <person name="Istrail S."/>
            <person name="Sutton G.G."/>
            <person name="Florea L."/>
            <person name="Halpern A.L."/>
            <person name="Mobarry C.M."/>
            <person name="Lippert R."/>
            <person name="Walenz B."/>
            <person name="Shatkay H."/>
            <person name="Dew I."/>
            <person name="Miller J.R."/>
            <person name="Flanigan M.J."/>
            <person name="Edwards N.J."/>
            <person name="Bolanos R."/>
            <person name="Fasulo D."/>
            <person name="Halldorsson B.V."/>
            <person name="Hannenhalli S."/>
            <person name="Turner R."/>
            <person name="Yooseph S."/>
            <person name="Lu F."/>
            <person name="Nusskern D.R."/>
            <person name="Shue B.C."/>
            <person name="Zheng X.H."/>
            <person name="Zhong F."/>
            <person name="Delcher A.L."/>
            <person name="Huson D.H."/>
            <person name="Kravitz S.A."/>
            <person name="Mouchard L."/>
            <person name="Reinert K."/>
            <person name="Remington K.A."/>
            <person name="Clark A.G."/>
            <person name="Waterman M.S."/>
            <person name="Eichler E.E."/>
            <person name="Adams M.D."/>
            <person name="Hunkapiller M.W."/>
            <person name="Myers E.W."/>
            <person name="Venter J.C."/>
        </authorList>
    </citation>
    <scope>NUCLEOTIDE SEQUENCE [LARGE SCALE GENOMIC DNA]</scope>
</reference>
<reference key="6">
    <citation type="journal article" date="2004" name="Genome Res.">
        <title>The status, quality, and expansion of the NIH full-length cDNA project: the Mammalian Gene Collection (MGC).</title>
        <authorList>
            <consortium name="The MGC Project Team"/>
        </authorList>
    </citation>
    <scope>NUCLEOTIDE SEQUENCE [LARGE SCALE MRNA] (ISOFORMS 1 AND 2)</scope>
    <source>
        <tissue>Brain</tissue>
    </source>
</reference>
<reference key="7">
    <citation type="journal article" date="2008" name="Mol. Cell">
        <title>Kinase-selective enrichment enables quantitative phosphoproteomics of the kinome across the cell cycle.</title>
        <authorList>
            <person name="Daub H."/>
            <person name="Olsen J.V."/>
            <person name="Bairlein M."/>
            <person name="Gnad F."/>
            <person name="Oppermann F.S."/>
            <person name="Korner R."/>
            <person name="Greff Z."/>
            <person name="Keri G."/>
            <person name="Stemmann O."/>
            <person name="Mann M."/>
        </authorList>
    </citation>
    <scope>PHOSPHORYLATION [LARGE SCALE ANALYSIS] AT SER-238</scope>
    <scope>IDENTIFICATION BY MASS SPECTROMETRY [LARGE SCALE ANALYSIS]</scope>
    <source>
        <tissue>Cervix carcinoma</tissue>
    </source>
</reference>
<reference key="8">
    <citation type="journal article" date="2008" name="Proc. Natl. Acad. Sci. U.S.A.">
        <title>A quantitative atlas of mitotic phosphorylation.</title>
        <authorList>
            <person name="Dephoure N."/>
            <person name="Zhou C."/>
            <person name="Villen J."/>
            <person name="Beausoleil S.A."/>
            <person name="Bakalarski C.E."/>
            <person name="Elledge S.J."/>
            <person name="Gygi S.P."/>
        </authorList>
    </citation>
    <scope>PHOSPHORYLATION [LARGE SCALE ANALYSIS] AT SER-138</scope>
    <scope>IDENTIFICATION BY MASS SPECTROMETRY [LARGE SCALE ANALYSIS]</scope>
    <source>
        <tissue>Cervix carcinoma</tissue>
    </source>
</reference>
<name>SCML1_HUMAN</name>
<sequence length="329" mass="37447">MMSNSSSEIDVIKTRIPTYDEDDNTILYAYETKPEFVNKEPNIVSDASCNTEEQLKTVDDVLIHCQVIYDALQNLDKKIDVIRRKVSKIQRFHARSLWTNHKRYGYKKHSYRLVKKLKLQKMKKNEVYETFSYPESYSPTLPVSRRENNSPSNLPRPSFCMEEYQRAELEEDPILSRTPSPVHPSDFSEHNCQPYYASDGATYGSSSGLCLGNPRADSIHNTYSTDHASAAPPSVTRSPVENDGYIEEGSITKHPSTWSVEAVVLFLKQTDPLALCPLVDLFRSHEIDGKALLLLTSDVLLKHLGVKLGTAVKLCYYIDRLKQGKCFEN</sequence>
<comment type="function">
    <text evidence="1">Putative Polycomb group (PcG) protein. PcG proteins act by forming multiprotein complexes, which are required to maintain the transcriptionally repressive state of homeotic genes throughout development. May be involved in spermatogenesis during sexual maturation (By similarity).</text>
</comment>
<comment type="interaction">
    <interactant intactId="EBI-12137487">
        <id>Q9UN30-2</id>
    </interactant>
    <interactant intactId="EBI-300173">
        <id>P05107</id>
        <label>ITGB2</label>
    </interactant>
    <organismsDiffer>false</organismsDiffer>
    <experiments>3</experiments>
</comment>
<comment type="interaction">
    <interactant intactId="EBI-12137487">
        <id>Q9UN30-2</id>
    </interactant>
    <interactant intactId="EBI-739832">
        <id>Q8TBB1</id>
        <label>LNX1</label>
    </interactant>
    <organismsDiffer>false</organismsDiffer>
    <experiments>3</experiments>
</comment>
<comment type="interaction">
    <interactant intactId="EBI-12137487">
        <id>Q9UN30-2</id>
    </interactant>
    <interactant intactId="EBI-752022">
        <id>P51606</id>
        <label>RENBP</label>
    </interactant>
    <organismsDiffer>false</organismsDiffer>
    <experiments>5</experiments>
</comment>
<comment type="interaction">
    <interactant intactId="EBI-12137487">
        <id>Q9UN30-2</id>
    </interactant>
    <interactant intactId="EBI-727004">
        <id>O00560</id>
        <label>SDCBP</label>
    </interactant>
    <organismsDiffer>false</organismsDiffer>
    <experiments>3</experiments>
</comment>
<comment type="interaction">
    <interactant intactId="EBI-12137487">
        <id>Q9UN30-2</id>
    </interactant>
    <interactant intactId="EBI-12025260">
        <id>Q5VUG0</id>
        <label>SFMBT2</label>
    </interactant>
    <organismsDiffer>false</organismsDiffer>
    <experiments>3</experiments>
</comment>
<comment type="subcellular location">
    <subcellularLocation>
        <location evidence="8">Nucleus</location>
    </subcellularLocation>
</comment>
<comment type="alternative products">
    <event type="alternative splicing"/>
    <isoform>
        <id>Q9UN30-3</id>
        <name>3</name>
        <sequence type="displayed"/>
    </isoform>
    <isoform>
        <id>Q9UN30-1</id>
        <name>1</name>
        <sequence type="described" ref="VSP_037800"/>
    </isoform>
    <isoform>
        <id>Q9UN30-2</id>
        <name>2</name>
        <sequence type="described" ref="VSP_037801"/>
    </isoform>
</comment>
<comment type="tissue specificity">
    <text evidence="4">Ubiquitous. Expressed in fetal and adult tissues.</text>
</comment>
<comment type="similarity">
    <text evidence="8">Belongs to the SCM family.</text>
</comment>
<gene>
    <name type="primary">SCML1</name>
</gene>
<protein>
    <recommendedName>
        <fullName>Sex comb on midleg-like protein 1</fullName>
    </recommendedName>
</protein>